<dbReference type="EC" id="2.5.1.78" evidence="1"/>
<dbReference type="EMBL" id="FM178379">
    <property type="protein sequence ID" value="CAQ78610.1"/>
    <property type="molecule type" value="Genomic_DNA"/>
</dbReference>
<dbReference type="SMR" id="B6EI99"/>
<dbReference type="KEGG" id="vsa:VSAL_I0925"/>
<dbReference type="eggNOG" id="COG0054">
    <property type="taxonomic scope" value="Bacteria"/>
</dbReference>
<dbReference type="HOGENOM" id="CLU_089358_1_1_6"/>
<dbReference type="UniPathway" id="UPA00275">
    <property type="reaction ID" value="UER00404"/>
</dbReference>
<dbReference type="Proteomes" id="UP000001730">
    <property type="component" value="Chromosome 1"/>
</dbReference>
<dbReference type="GO" id="GO:0005829">
    <property type="term" value="C:cytosol"/>
    <property type="evidence" value="ECO:0007669"/>
    <property type="project" value="TreeGrafter"/>
</dbReference>
<dbReference type="GO" id="GO:0009349">
    <property type="term" value="C:riboflavin synthase complex"/>
    <property type="evidence" value="ECO:0007669"/>
    <property type="project" value="InterPro"/>
</dbReference>
<dbReference type="GO" id="GO:0000906">
    <property type="term" value="F:6,7-dimethyl-8-ribityllumazine synthase activity"/>
    <property type="evidence" value="ECO:0007669"/>
    <property type="project" value="UniProtKB-UniRule"/>
</dbReference>
<dbReference type="GO" id="GO:0009231">
    <property type="term" value="P:riboflavin biosynthetic process"/>
    <property type="evidence" value="ECO:0007669"/>
    <property type="project" value="UniProtKB-UniRule"/>
</dbReference>
<dbReference type="CDD" id="cd09209">
    <property type="entry name" value="Lumazine_synthase-I"/>
    <property type="match status" value="1"/>
</dbReference>
<dbReference type="FunFam" id="3.40.50.960:FF:000001">
    <property type="entry name" value="6,7-dimethyl-8-ribityllumazine synthase"/>
    <property type="match status" value="1"/>
</dbReference>
<dbReference type="Gene3D" id="3.40.50.960">
    <property type="entry name" value="Lumazine/riboflavin synthase"/>
    <property type="match status" value="1"/>
</dbReference>
<dbReference type="HAMAP" id="MF_00178">
    <property type="entry name" value="Lumazine_synth"/>
    <property type="match status" value="1"/>
</dbReference>
<dbReference type="InterPro" id="IPR034964">
    <property type="entry name" value="LS"/>
</dbReference>
<dbReference type="InterPro" id="IPR002180">
    <property type="entry name" value="LS/RS"/>
</dbReference>
<dbReference type="InterPro" id="IPR036467">
    <property type="entry name" value="LS/RS_sf"/>
</dbReference>
<dbReference type="NCBIfam" id="TIGR00114">
    <property type="entry name" value="lumazine-synth"/>
    <property type="match status" value="1"/>
</dbReference>
<dbReference type="NCBIfam" id="NF000812">
    <property type="entry name" value="PRK00061.1-4"/>
    <property type="match status" value="1"/>
</dbReference>
<dbReference type="PANTHER" id="PTHR21058:SF0">
    <property type="entry name" value="6,7-DIMETHYL-8-RIBITYLLUMAZINE SYNTHASE"/>
    <property type="match status" value="1"/>
</dbReference>
<dbReference type="PANTHER" id="PTHR21058">
    <property type="entry name" value="6,7-DIMETHYL-8-RIBITYLLUMAZINE SYNTHASE DMRL SYNTHASE LUMAZINE SYNTHASE"/>
    <property type="match status" value="1"/>
</dbReference>
<dbReference type="Pfam" id="PF00885">
    <property type="entry name" value="DMRL_synthase"/>
    <property type="match status" value="1"/>
</dbReference>
<dbReference type="SUPFAM" id="SSF52121">
    <property type="entry name" value="Lumazine synthase"/>
    <property type="match status" value="1"/>
</dbReference>
<evidence type="ECO:0000255" key="1">
    <source>
        <dbReference type="HAMAP-Rule" id="MF_00178"/>
    </source>
</evidence>
<protein>
    <recommendedName>
        <fullName evidence="1">6,7-dimethyl-8-ribityllumazine synthase</fullName>
        <shortName evidence="1">DMRL synthase</shortName>
        <shortName evidence="1">LS</shortName>
        <shortName evidence="1">Lumazine synthase</shortName>
        <ecNumber evidence="1">2.5.1.78</ecNumber>
    </recommendedName>
</protein>
<gene>
    <name evidence="1" type="primary">ribH</name>
    <name type="ordered locus">VSAL_I0925</name>
</gene>
<sequence>MNVIEGGVAAPNAKIAIVISRFNSFINESLLSGAIDTLKRFGQVSEENITVVRCPGAVELPLVAQRVAKTAKYDAIVSLGSVIRGGTPHFEYVCSECNKGLAQVSLEYSIPVAFGVLTVDTIDQAIERAGTKAGNKGAEAALSALEMINVLSQIES</sequence>
<comment type="function">
    <text evidence="1">Catalyzes the formation of 6,7-dimethyl-8-ribityllumazine by condensation of 5-amino-6-(D-ribitylamino)uracil with 3,4-dihydroxy-2-butanone 4-phosphate. This is the penultimate step in the biosynthesis of riboflavin.</text>
</comment>
<comment type="catalytic activity">
    <reaction evidence="1">
        <text>(2S)-2-hydroxy-3-oxobutyl phosphate + 5-amino-6-(D-ribitylamino)uracil = 6,7-dimethyl-8-(1-D-ribityl)lumazine + phosphate + 2 H2O + H(+)</text>
        <dbReference type="Rhea" id="RHEA:26152"/>
        <dbReference type="ChEBI" id="CHEBI:15377"/>
        <dbReference type="ChEBI" id="CHEBI:15378"/>
        <dbReference type="ChEBI" id="CHEBI:15934"/>
        <dbReference type="ChEBI" id="CHEBI:43474"/>
        <dbReference type="ChEBI" id="CHEBI:58201"/>
        <dbReference type="ChEBI" id="CHEBI:58830"/>
        <dbReference type="EC" id="2.5.1.78"/>
    </reaction>
</comment>
<comment type="pathway">
    <text evidence="1">Cofactor biosynthesis; riboflavin biosynthesis; riboflavin from 2-hydroxy-3-oxobutyl phosphate and 5-amino-6-(D-ribitylamino)uracil: step 1/2.</text>
</comment>
<comment type="subunit">
    <text evidence="1">Forms an icosahedral capsid composed of 60 subunits, arranged as a dodecamer of pentamers.</text>
</comment>
<comment type="similarity">
    <text evidence="1">Belongs to the DMRL synthase family.</text>
</comment>
<name>RISB_ALISL</name>
<feature type="chain" id="PRO_1000098160" description="6,7-dimethyl-8-ribityllumazine synthase">
    <location>
        <begin position="1"/>
        <end position="156"/>
    </location>
</feature>
<feature type="active site" description="Proton donor" evidence="1">
    <location>
        <position position="89"/>
    </location>
</feature>
<feature type="binding site" evidence="1">
    <location>
        <position position="22"/>
    </location>
    <ligand>
        <name>5-amino-6-(D-ribitylamino)uracil</name>
        <dbReference type="ChEBI" id="CHEBI:15934"/>
    </ligand>
</feature>
<feature type="binding site" evidence="1">
    <location>
        <begin position="57"/>
        <end position="59"/>
    </location>
    <ligand>
        <name>5-amino-6-(D-ribitylamino)uracil</name>
        <dbReference type="ChEBI" id="CHEBI:15934"/>
    </ligand>
</feature>
<feature type="binding site" evidence="1">
    <location>
        <begin position="81"/>
        <end position="83"/>
    </location>
    <ligand>
        <name>5-amino-6-(D-ribitylamino)uracil</name>
        <dbReference type="ChEBI" id="CHEBI:15934"/>
    </ligand>
</feature>
<feature type="binding site" evidence="1">
    <location>
        <begin position="86"/>
        <end position="87"/>
    </location>
    <ligand>
        <name>(2S)-2-hydroxy-3-oxobutyl phosphate</name>
        <dbReference type="ChEBI" id="CHEBI:58830"/>
    </ligand>
</feature>
<feature type="binding site" evidence="1">
    <location>
        <position position="114"/>
    </location>
    <ligand>
        <name>5-amino-6-(D-ribitylamino)uracil</name>
        <dbReference type="ChEBI" id="CHEBI:15934"/>
    </ligand>
</feature>
<feature type="binding site" evidence="1">
    <location>
        <position position="128"/>
    </location>
    <ligand>
        <name>(2S)-2-hydroxy-3-oxobutyl phosphate</name>
        <dbReference type="ChEBI" id="CHEBI:58830"/>
    </ligand>
</feature>
<organism>
    <name type="scientific">Aliivibrio salmonicida (strain LFI1238)</name>
    <name type="common">Vibrio salmonicida (strain LFI1238)</name>
    <dbReference type="NCBI Taxonomy" id="316275"/>
    <lineage>
        <taxon>Bacteria</taxon>
        <taxon>Pseudomonadati</taxon>
        <taxon>Pseudomonadota</taxon>
        <taxon>Gammaproteobacteria</taxon>
        <taxon>Vibrionales</taxon>
        <taxon>Vibrionaceae</taxon>
        <taxon>Aliivibrio</taxon>
    </lineage>
</organism>
<reference key="1">
    <citation type="journal article" date="2008" name="BMC Genomics">
        <title>The genome sequence of the fish pathogen Aliivibrio salmonicida strain LFI1238 shows extensive evidence of gene decay.</title>
        <authorList>
            <person name="Hjerde E."/>
            <person name="Lorentzen M.S."/>
            <person name="Holden M.T."/>
            <person name="Seeger K."/>
            <person name="Paulsen S."/>
            <person name="Bason N."/>
            <person name="Churcher C."/>
            <person name="Harris D."/>
            <person name="Norbertczak H."/>
            <person name="Quail M.A."/>
            <person name="Sanders S."/>
            <person name="Thurston S."/>
            <person name="Parkhill J."/>
            <person name="Willassen N.P."/>
            <person name="Thomson N.R."/>
        </authorList>
    </citation>
    <scope>NUCLEOTIDE SEQUENCE [LARGE SCALE GENOMIC DNA]</scope>
    <source>
        <strain>LFI1238</strain>
    </source>
</reference>
<accession>B6EI99</accession>
<keyword id="KW-0686">Riboflavin biosynthesis</keyword>
<keyword id="KW-0808">Transferase</keyword>
<proteinExistence type="inferred from homology"/>